<protein>
    <recommendedName>
        <fullName>Proton pump-interactor 2</fullName>
    </recommendedName>
</protein>
<sequence>MGAQIILSEGFEVVPPPEMNDLVLFGSNQSVSSCDVSTVTTEDGTVFSGDSSPGGATEEDFPEEKPFSFYFVKQPAYDDPEIKAKIDEAGHEINRYNKDRIVVSNAQESEKAEILSLFGQMKSLVSKSEGYRVVIEEKKMEFDALHESLRNLRCSTSDQLCFSKEELDHLIYIAHYQIEHGSIGFEEEDWVLKETEKADGIVLSEDSLAEKEASINRVKSMAVELNEVKKELDAITWKINHLSDKVGKSQNNLRVLDVKKAHILEERDRSYERIKMLRIQRDKGKAAFYQSLPVMRKARELAASGNVRDLEVFASSEADRFMTQWNDDKAFRDDYVKRISPSLCERQLNQDGRIKDPEVQVVWEKKVPVKGGEKVHETNREDSSSNSSQYGSVITDKRKKETRKKAMDFNRSSAEESDVTDLEFSVYEKPKKEEEEVDEETLKEREREEQLEKARLAMERKRKLQEKAAAKAAIRAQKEAEKKLKECEKKAKKKAAANSSSPSESDHSQEVTKDLEKVRTLAVSGKEKHQKERSLFPKQRSFRYKHRGRGTEALPKAILNRRKAHKYWVWGLSSAALAVALFLVVLLLR</sequence>
<organism>
    <name type="scientific">Arabidopsis thaliana</name>
    <name type="common">Mouse-ear cress</name>
    <dbReference type="NCBI Taxonomy" id="3702"/>
    <lineage>
        <taxon>Eukaryota</taxon>
        <taxon>Viridiplantae</taxon>
        <taxon>Streptophyta</taxon>
        <taxon>Embryophyta</taxon>
        <taxon>Tracheophyta</taxon>
        <taxon>Spermatophyta</taxon>
        <taxon>Magnoliopsida</taxon>
        <taxon>eudicotyledons</taxon>
        <taxon>Gunneridae</taxon>
        <taxon>Pentapetalae</taxon>
        <taxon>rosids</taxon>
        <taxon>malvids</taxon>
        <taxon>Brassicales</taxon>
        <taxon>Brassicaceae</taxon>
        <taxon>Camelineae</taxon>
        <taxon>Arabidopsis</taxon>
    </lineage>
</organism>
<evidence type="ECO:0000250" key="1"/>
<evidence type="ECO:0000255" key="2"/>
<evidence type="ECO:0000256" key="3">
    <source>
        <dbReference type="SAM" id="MobiDB-lite"/>
    </source>
</evidence>
<evidence type="ECO:0000269" key="4">
    <source>
    </source>
</evidence>
<evidence type="ECO:0000305" key="5"/>
<reference key="1">
    <citation type="journal article" date="2000" name="DNA Res.">
        <title>Structural analysis of Arabidopsis thaliana chromosome 3. II. Sequence features of the 4,251,695 bp regions covered by 90 P1, TAC and BAC clones.</title>
        <authorList>
            <person name="Kaneko T."/>
            <person name="Katoh T."/>
            <person name="Sato S."/>
            <person name="Nakamura Y."/>
            <person name="Asamizu E."/>
            <person name="Tabata S."/>
        </authorList>
    </citation>
    <scope>NUCLEOTIDE SEQUENCE [LARGE SCALE GENOMIC DNA]</scope>
    <source>
        <strain>cv. Columbia</strain>
    </source>
</reference>
<reference key="2">
    <citation type="journal article" date="2017" name="Plant J.">
        <title>Araport11: a complete reannotation of the Arabidopsis thaliana reference genome.</title>
        <authorList>
            <person name="Cheng C.Y."/>
            <person name="Krishnakumar V."/>
            <person name="Chan A.P."/>
            <person name="Thibaud-Nissen F."/>
            <person name="Schobel S."/>
            <person name="Town C.D."/>
        </authorList>
    </citation>
    <scope>GENOME REANNOTATION</scope>
    <source>
        <strain>cv. Columbia</strain>
    </source>
</reference>
<reference key="3">
    <citation type="journal article" date="2002" name="Plant J.">
        <title>A novel interaction partner for the C-terminus of Arabidopsis thaliana plasma membrane H+-ATPase (AHA1 isoform): site and mechanism of action on H+-ATPase activity differ from those of 14-3-3 proteins.</title>
        <authorList>
            <person name="Morandini P."/>
            <person name="Valera M."/>
            <person name="Albumi C."/>
            <person name="Bonza M.C."/>
            <person name="Giacometti S."/>
            <person name="Ravera G."/>
            <person name="Murgia I."/>
            <person name="Soave C."/>
            <person name="De Michelis M.I."/>
        </authorList>
    </citation>
    <scope>GENE FAMILY</scope>
    <scope>NOMENCLATURE</scope>
</reference>
<reference key="4">
    <citation type="journal article" date="2008" name="Plant Biol.">
        <title>The proton pump interactor (Ppi) gene family of Arabidopsis thaliana: expression pattern of Ppi1 and characterisation of knockout mutants for Ppi1 and 2.</title>
        <authorList>
            <person name="Anzi C."/>
            <person name="Pelucchi P."/>
            <person name="Vazzola V."/>
            <person name="Murgia I."/>
            <person name="Gomarasca S."/>
            <person name="Piccoli M.B."/>
            <person name="Morandini P."/>
        </authorList>
    </citation>
    <scope>TISSUE SPECIFICITY</scope>
    <source>
        <strain>cv. Columbia</strain>
    </source>
</reference>
<dbReference type="EMBL" id="AP000413">
    <property type="protein sequence ID" value="BAB02163.1"/>
    <property type="status" value="ALT_SEQ"/>
    <property type="molecule type" value="Genomic_DNA"/>
</dbReference>
<dbReference type="EMBL" id="CP002686">
    <property type="protein sequence ID" value="AEE75643.1"/>
    <property type="molecule type" value="Genomic_DNA"/>
</dbReference>
<dbReference type="EMBL" id="CP002686">
    <property type="protein sequence ID" value="AEE75644.1"/>
    <property type="molecule type" value="Genomic_DNA"/>
</dbReference>
<dbReference type="EMBL" id="CP002686">
    <property type="protein sequence ID" value="ANM64261.1"/>
    <property type="molecule type" value="Genomic_DNA"/>
</dbReference>
<dbReference type="RefSeq" id="NP_001118633.1">
    <molecule id="B3H4K7-2"/>
    <property type="nucleotide sequence ID" value="NM_001125161.1"/>
</dbReference>
<dbReference type="RefSeq" id="NP_001326301.1">
    <molecule id="B3H4K7-1"/>
    <property type="nucleotide sequence ID" value="NM_001338153.1"/>
</dbReference>
<dbReference type="RefSeq" id="NP_188152.3">
    <molecule id="B3H4K7-1"/>
    <property type="nucleotide sequence ID" value="NM_112397.4"/>
</dbReference>
<dbReference type="SMR" id="B3H4K7"/>
<dbReference type="STRING" id="3702.B3H4K7"/>
<dbReference type="PaxDb" id="3702-AT3G15340.1"/>
<dbReference type="ProteomicsDB" id="249346">
    <molecule id="B3H4K7-1"/>
</dbReference>
<dbReference type="EnsemblPlants" id="AT3G15340.1">
    <molecule id="B3H4K7-1"/>
    <property type="protein sequence ID" value="AT3G15340.1"/>
    <property type="gene ID" value="AT3G15340"/>
</dbReference>
<dbReference type="EnsemblPlants" id="AT3G15340.2">
    <molecule id="B3H4K7-2"/>
    <property type="protein sequence ID" value="AT3G15340.2"/>
    <property type="gene ID" value="AT3G15340"/>
</dbReference>
<dbReference type="EnsemblPlants" id="AT3G15340.3">
    <molecule id="B3H4K7-1"/>
    <property type="protein sequence ID" value="AT3G15340.3"/>
    <property type="gene ID" value="AT3G15340"/>
</dbReference>
<dbReference type="GeneID" id="820765"/>
<dbReference type="Gramene" id="AT3G15340.1">
    <molecule id="B3H4K7-1"/>
    <property type="protein sequence ID" value="AT3G15340.1"/>
    <property type="gene ID" value="AT3G15340"/>
</dbReference>
<dbReference type="Gramene" id="AT3G15340.2">
    <molecule id="B3H4K7-2"/>
    <property type="protein sequence ID" value="AT3G15340.2"/>
    <property type="gene ID" value="AT3G15340"/>
</dbReference>
<dbReference type="Gramene" id="AT3G15340.3">
    <molecule id="B3H4K7-1"/>
    <property type="protein sequence ID" value="AT3G15340.3"/>
    <property type="gene ID" value="AT3G15340"/>
</dbReference>
<dbReference type="KEGG" id="ath:AT3G15340"/>
<dbReference type="Araport" id="AT3G15340"/>
<dbReference type="TAIR" id="AT3G15340">
    <property type="gene designation" value="PPI2"/>
</dbReference>
<dbReference type="eggNOG" id="ENOG502QQX1">
    <property type="taxonomic scope" value="Eukaryota"/>
</dbReference>
<dbReference type="InParanoid" id="B3H4K7"/>
<dbReference type="OMA" id="GHEINRY"/>
<dbReference type="PhylomeDB" id="B3H4K7"/>
<dbReference type="PRO" id="PR:B3H4K7"/>
<dbReference type="Proteomes" id="UP000006548">
    <property type="component" value="Chromosome 3"/>
</dbReference>
<dbReference type="ExpressionAtlas" id="B3H4K7">
    <property type="expression patterns" value="baseline and differential"/>
</dbReference>
<dbReference type="GO" id="GO:0005789">
    <property type="term" value="C:endoplasmic reticulum membrane"/>
    <property type="evidence" value="ECO:0000250"/>
    <property type="project" value="UniProtKB"/>
</dbReference>
<dbReference type="GO" id="GO:0005886">
    <property type="term" value="C:plasma membrane"/>
    <property type="evidence" value="ECO:0000250"/>
    <property type="project" value="UniProtKB"/>
</dbReference>
<dbReference type="GO" id="GO:0010155">
    <property type="term" value="P:regulation of proton transport"/>
    <property type="evidence" value="ECO:0000250"/>
    <property type="project" value="UniProtKB"/>
</dbReference>
<dbReference type="InterPro" id="IPR055282">
    <property type="entry name" value="PPI1-4"/>
</dbReference>
<dbReference type="PANTHER" id="PTHR32219:SF8">
    <property type="entry name" value="PROTON PUMP-INTERACTOR 2-RELATED"/>
    <property type="match status" value="1"/>
</dbReference>
<dbReference type="PANTHER" id="PTHR32219">
    <property type="entry name" value="RNA-BINDING PROTEIN YLMH-RELATED"/>
    <property type="match status" value="1"/>
</dbReference>
<comment type="function">
    <text evidence="1">May regulate plasma membrane ATPase activity.</text>
</comment>
<comment type="subcellular location">
    <subcellularLocation>
        <location evidence="1">Cell membrane</location>
        <topology evidence="1">Single-pass membrane protein</topology>
    </subcellularLocation>
    <subcellularLocation>
        <location evidence="1">Endoplasmic reticulum membrane</location>
        <topology evidence="1">Single-pass membrane protein</topology>
    </subcellularLocation>
</comment>
<comment type="alternative products">
    <event type="alternative splicing"/>
    <isoform>
        <id>B3H4K7-1</id>
        <name>1</name>
        <sequence type="displayed"/>
    </isoform>
    <isoform>
        <id>B3H4K7-2</id>
        <name>2</name>
        <sequence type="described" ref="VSP_044423"/>
    </isoform>
</comment>
<comment type="tissue specificity">
    <text evidence="4">Expressed in seedlings and flowers.</text>
</comment>
<comment type="similarity">
    <text evidence="5">Belongs to the plant Proton pump-interactor protein family.</text>
</comment>
<comment type="sequence caution" evidence="5">
    <conflict type="erroneous gene model prediction">
        <sequence resource="EMBL-CDS" id="BAB02163"/>
    </conflict>
</comment>
<proteinExistence type="evidence at transcript level"/>
<gene>
    <name type="primary">PPI2</name>
    <name type="ordered locus">At3g15340</name>
    <name type="ORF">K7L4.14</name>
</gene>
<name>PPI2_ARATH</name>
<keyword id="KW-0025">Alternative splicing</keyword>
<keyword id="KW-1003">Cell membrane</keyword>
<keyword id="KW-0175">Coiled coil</keyword>
<keyword id="KW-0256">Endoplasmic reticulum</keyword>
<keyword id="KW-0472">Membrane</keyword>
<keyword id="KW-1185">Reference proteome</keyword>
<keyword id="KW-0812">Transmembrane</keyword>
<keyword id="KW-1133">Transmembrane helix</keyword>
<feature type="chain" id="PRO_0000420213" description="Proton pump-interactor 2">
    <location>
        <begin position="1"/>
        <end position="589"/>
    </location>
</feature>
<feature type="transmembrane region" description="Helical" evidence="2">
    <location>
        <begin position="568"/>
        <end position="588"/>
    </location>
</feature>
<feature type="region of interest" description="Disordered" evidence="3">
    <location>
        <begin position="370"/>
        <end position="450"/>
    </location>
</feature>
<feature type="region of interest" description="Disordered" evidence="3">
    <location>
        <begin position="485"/>
        <end position="534"/>
    </location>
</feature>
<feature type="coiled-coil region" evidence="2">
    <location>
        <begin position="205"/>
        <end position="245"/>
    </location>
</feature>
<feature type="coiled-coil region" evidence="2">
    <location>
        <begin position="431"/>
        <end position="500"/>
    </location>
</feature>
<feature type="compositionally biased region" description="Basic and acidic residues" evidence="3">
    <location>
        <begin position="370"/>
        <end position="383"/>
    </location>
</feature>
<feature type="compositionally biased region" description="Basic and acidic residues" evidence="3">
    <location>
        <begin position="395"/>
        <end position="408"/>
    </location>
</feature>
<feature type="compositionally biased region" description="Basic and acidic residues" evidence="3">
    <location>
        <begin position="426"/>
        <end position="450"/>
    </location>
</feature>
<feature type="compositionally biased region" description="Basic and acidic residues" evidence="3">
    <location>
        <begin position="504"/>
        <end position="534"/>
    </location>
</feature>
<feature type="splice variant" id="VSP_044423" description="In isoform 2." evidence="5">
    <location>
        <begin position="1"/>
        <end position="120"/>
    </location>
</feature>
<accession>B3H4K7</accession>
<accession>B6EUC1</accession>
<accession>Q9LJR4</accession>